<proteinExistence type="inferred from homology"/>
<sequence>MSYKNRLTACFDDILKVSAEMMMQQQLKNVQLDPYMVNGFSAQQQNTLKEKIHMFHGILDDLENMLSKSTYYVDTLANLGKESKRQKELELEKQREQEEEEKKQKLLELERKKKEQEEEEEKKKKQKEEEEKRKKELEEQERKKKEQEEEEKRRRQQEQDGDKQQSMFDGLDFTNADLDTSQPGTSGQNDIKSPTMGAGPQTAGTDKPNTADGPDKTNPPIAAFGLGDSQSGGLYNDLNTMDLSMFSELDGGGFDASGFDTANTSNANATTNSVPNNNNPATNDSNMNNDPTAAINAFDGTAAGNNETLGQGEKLEFDQSNPSAMLGNDINMGDNGEDYLTLNDFNDLNIDWSAAGEGGDLDLNGFNI</sequence>
<organism>
    <name type="scientific">Candida glabrata (strain ATCC 2001 / BCRC 20586 / JCM 3761 / NBRC 0622 / NRRL Y-65 / CBS 138)</name>
    <name type="common">Yeast</name>
    <name type="synonym">Nakaseomyces glabratus</name>
    <dbReference type="NCBI Taxonomy" id="284593"/>
    <lineage>
        <taxon>Eukaryota</taxon>
        <taxon>Fungi</taxon>
        <taxon>Dikarya</taxon>
        <taxon>Ascomycota</taxon>
        <taxon>Saccharomycotina</taxon>
        <taxon>Saccharomycetes</taxon>
        <taxon>Saccharomycetales</taxon>
        <taxon>Saccharomycetaceae</taxon>
        <taxon>Nakaseomyces</taxon>
    </lineage>
</organism>
<keyword id="KW-0010">Activator</keyword>
<keyword id="KW-0539">Nucleus</keyword>
<keyword id="KW-1185">Reference proteome</keyword>
<keyword id="KW-0804">Transcription</keyword>
<keyword id="KW-0805">Transcription regulation</keyword>
<gene>
    <name type="primary">MED2</name>
    <name type="ordered locus">CAGL0C04477g</name>
</gene>
<evidence type="ECO:0000250" key="1"/>
<evidence type="ECO:0000256" key="2">
    <source>
        <dbReference type="SAM" id="MobiDB-lite"/>
    </source>
</evidence>
<evidence type="ECO:0000305" key="3"/>
<protein>
    <recommendedName>
        <fullName>Mediator of RNA polymerase II transcription subunit 2</fullName>
    </recommendedName>
    <alternativeName>
        <fullName>Mediator complex subunit 2</fullName>
    </alternativeName>
</protein>
<name>MED2_CANGA</name>
<accession>Q6FWM4</accession>
<dbReference type="EMBL" id="CR380949">
    <property type="protein sequence ID" value="CAG58276.1"/>
    <property type="molecule type" value="Genomic_DNA"/>
</dbReference>
<dbReference type="RefSeq" id="XP_445370.1">
    <property type="nucleotide sequence ID" value="XM_445370.1"/>
</dbReference>
<dbReference type="SMR" id="Q6FWM4"/>
<dbReference type="FunCoup" id="Q6FWM4">
    <property type="interactions" value="143"/>
</dbReference>
<dbReference type="STRING" id="284593.Q6FWM4"/>
<dbReference type="EnsemblFungi" id="CAGL0C04477g-T">
    <property type="protein sequence ID" value="CAGL0C04477g-T-p1"/>
    <property type="gene ID" value="CAGL0C04477g"/>
</dbReference>
<dbReference type="GeneID" id="2886897"/>
<dbReference type="KEGG" id="cgr:2886897"/>
<dbReference type="CGD" id="CAL0127500">
    <property type="gene designation" value="MED2"/>
</dbReference>
<dbReference type="VEuPathDB" id="FungiDB:CAGL0C04477g"/>
<dbReference type="eggNOG" id="ENOG502RZB6">
    <property type="taxonomic scope" value="Eukaryota"/>
</dbReference>
<dbReference type="HOGENOM" id="CLU_046031_0_0_1"/>
<dbReference type="InParanoid" id="Q6FWM4"/>
<dbReference type="OMA" id="AEMMMQQ"/>
<dbReference type="Proteomes" id="UP000002428">
    <property type="component" value="Chromosome C"/>
</dbReference>
<dbReference type="GO" id="GO:0070847">
    <property type="term" value="C:core mediator complex"/>
    <property type="evidence" value="ECO:0007669"/>
    <property type="project" value="EnsemblFungi"/>
</dbReference>
<dbReference type="GO" id="GO:0005829">
    <property type="term" value="C:cytosol"/>
    <property type="evidence" value="ECO:0007669"/>
    <property type="project" value="EnsemblFungi"/>
</dbReference>
<dbReference type="GO" id="GO:0016592">
    <property type="term" value="C:mediator complex"/>
    <property type="evidence" value="ECO:0007669"/>
    <property type="project" value="EnsemblFungi"/>
</dbReference>
<dbReference type="GO" id="GO:0061629">
    <property type="term" value="F:RNA polymerase II-specific DNA-binding transcription factor binding"/>
    <property type="evidence" value="ECO:0007669"/>
    <property type="project" value="EnsemblFungi"/>
</dbReference>
<dbReference type="GO" id="GO:0003713">
    <property type="term" value="F:transcription coactivator activity"/>
    <property type="evidence" value="ECO:0007669"/>
    <property type="project" value="EnsemblFungi"/>
</dbReference>
<dbReference type="GO" id="GO:0000122">
    <property type="term" value="P:negative regulation of transcription by RNA polymerase II"/>
    <property type="evidence" value="ECO:0007669"/>
    <property type="project" value="EnsemblFungi"/>
</dbReference>
<dbReference type="GO" id="GO:0032968">
    <property type="term" value="P:positive regulation of transcription elongation by RNA polymerase II"/>
    <property type="evidence" value="ECO:0007669"/>
    <property type="project" value="EnsemblFungi"/>
</dbReference>
<dbReference type="GO" id="GO:0060261">
    <property type="term" value="P:positive regulation of transcription initiation by RNA polymerase II"/>
    <property type="evidence" value="ECO:0007669"/>
    <property type="project" value="EnsemblFungi"/>
</dbReference>
<dbReference type="GO" id="GO:0034976">
    <property type="term" value="P:response to endoplasmic reticulum stress"/>
    <property type="evidence" value="ECO:0007669"/>
    <property type="project" value="EnsemblFungi"/>
</dbReference>
<dbReference type="GO" id="GO:0051123">
    <property type="term" value="P:RNA polymerase II preinitiation complex assembly"/>
    <property type="evidence" value="ECO:0007669"/>
    <property type="project" value="EnsemblFungi"/>
</dbReference>
<dbReference type="InterPro" id="IPR021017">
    <property type="entry name" value="Mediator_Med2_fun"/>
</dbReference>
<dbReference type="Pfam" id="PF11214">
    <property type="entry name" value="Med2"/>
    <property type="match status" value="1"/>
</dbReference>
<feature type="chain" id="PRO_0000302014" description="Mediator of RNA polymerase II transcription subunit 2">
    <location>
        <begin position="1"/>
        <end position="368"/>
    </location>
</feature>
<feature type="region of interest" description="Disordered" evidence="2">
    <location>
        <begin position="112"/>
        <end position="231"/>
    </location>
</feature>
<feature type="region of interest" description="Disordered" evidence="2">
    <location>
        <begin position="265"/>
        <end position="308"/>
    </location>
</feature>
<feature type="compositionally biased region" description="Basic and acidic residues" evidence="2">
    <location>
        <begin position="112"/>
        <end position="163"/>
    </location>
</feature>
<feature type="compositionally biased region" description="Polar residues" evidence="2">
    <location>
        <begin position="177"/>
        <end position="192"/>
    </location>
</feature>
<feature type="compositionally biased region" description="Low complexity" evidence="2">
    <location>
        <begin position="265"/>
        <end position="290"/>
    </location>
</feature>
<comment type="function">
    <text evidence="1">Component of the Mediator complex, a coactivator involved in the regulated transcription of nearly all RNA polymerase II-dependent genes. Mediator functions as a bridge to convey information from gene-specific regulatory proteins to the basal RNA polymerase II transcription machinery. Mediator is recruited to promoters by direct interactions with regulatory proteins and serves as a scaffold for the assembly of a functional preinitiation complex with RNA polymerase II and the general transcription factors (By similarity).</text>
</comment>
<comment type="subunit">
    <text evidence="1">Component of the Mediator complex.</text>
</comment>
<comment type="subcellular location">
    <subcellularLocation>
        <location evidence="1">Nucleus</location>
    </subcellularLocation>
</comment>
<comment type="similarity">
    <text evidence="3">Belongs to the Mediator complex subunit 2 family.</text>
</comment>
<reference key="1">
    <citation type="journal article" date="2004" name="Nature">
        <title>Genome evolution in yeasts.</title>
        <authorList>
            <person name="Dujon B."/>
            <person name="Sherman D."/>
            <person name="Fischer G."/>
            <person name="Durrens P."/>
            <person name="Casaregola S."/>
            <person name="Lafontaine I."/>
            <person name="de Montigny J."/>
            <person name="Marck C."/>
            <person name="Neuveglise C."/>
            <person name="Talla E."/>
            <person name="Goffard N."/>
            <person name="Frangeul L."/>
            <person name="Aigle M."/>
            <person name="Anthouard V."/>
            <person name="Babour A."/>
            <person name="Barbe V."/>
            <person name="Barnay S."/>
            <person name="Blanchin S."/>
            <person name="Beckerich J.-M."/>
            <person name="Beyne E."/>
            <person name="Bleykasten C."/>
            <person name="Boisrame A."/>
            <person name="Boyer J."/>
            <person name="Cattolico L."/>
            <person name="Confanioleri F."/>
            <person name="de Daruvar A."/>
            <person name="Despons L."/>
            <person name="Fabre E."/>
            <person name="Fairhead C."/>
            <person name="Ferry-Dumazet H."/>
            <person name="Groppi A."/>
            <person name="Hantraye F."/>
            <person name="Hennequin C."/>
            <person name="Jauniaux N."/>
            <person name="Joyet P."/>
            <person name="Kachouri R."/>
            <person name="Kerrest A."/>
            <person name="Koszul R."/>
            <person name="Lemaire M."/>
            <person name="Lesur I."/>
            <person name="Ma L."/>
            <person name="Muller H."/>
            <person name="Nicaud J.-M."/>
            <person name="Nikolski M."/>
            <person name="Oztas S."/>
            <person name="Ozier-Kalogeropoulos O."/>
            <person name="Pellenz S."/>
            <person name="Potier S."/>
            <person name="Richard G.-F."/>
            <person name="Straub M.-L."/>
            <person name="Suleau A."/>
            <person name="Swennen D."/>
            <person name="Tekaia F."/>
            <person name="Wesolowski-Louvel M."/>
            <person name="Westhof E."/>
            <person name="Wirth B."/>
            <person name="Zeniou-Meyer M."/>
            <person name="Zivanovic Y."/>
            <person name="Bolotin-Fukuhara M."/>
            <person name="Thierry A."/>
            <person name="Bouchier C."/>
            <person name="Caudron B."/>
            <person name="Scarpelli C."/>
            <person name="Gaillardin C."/>
            <person name="Weissenbach J."/>
            <person name="Wincker P."/>
            <person name="Souciet J.-L."/>
        </authorList>
    </citation>
    <scope>NUCLEOTIDE SEQUENCE [LARGE SCALE GENOMIC DNA]</scope>
    <source>
        <strain>ATCC 2001 / BCRC 20586 / JCM 3761 / NBRC 0622 / NRRL Y-65 / CBS 138</strain>
    </source>
</reference>